<reference key="1">
    <citation type="journal article" date="2005" name="Science">
        <title>The transcriptional landscape of the mammalian genome.</title>
        <authorList>
            <person name="Carninci P."/>
            <person name="Kasukawa T."/>
            <person name="Katayama S."/>
            <person name="Gough J."/>
            <person name="Frith M.C."/>
            <person name="Maeda N."/>
            <person name="Oyama R."/>
            <person name="Ravasi T."/>
            <person name="Lenhard B."/>
            <person name="Wells C."/>
            <person name="Kodzius R."/>
            <person name="Shimokawa K."/>
            <person name="Bajic V.B."/>
            <person name="Brenner S.E."/>
            <person name="Batalov S."/>
            <person name="Forrest A.R."/>
            <person name="Zavolan M."/>
            <person name="Davis M.J."/>
            <person name="Wilming L.G."/>
            <person name="Aidinis V."/>
            <person name="Allen J.E."/>
            <person name="Ambesi-Impiombato A."/>
            <person name="Apweiler R."/>
            <person name="Aturaliya R.N."/>
            <person name="Bailey T.L."/>
            <person name="Bansal M."/>
            <person name="Baxter L."/>
            <person name="Beisel K.W."/>
            <person name="Bersano T."/>
            <person name="Bono H."/>
            <person name="Chalk A.M."/>
            <person name="Chiu K.P."/>
            <person name="Choudhary V."/>
            <person name="Christoffels A."/>
            <person name="Clutterbuck D.R."/>
            <person name="Crowe M.L."/>
            <person name="Dalla E."/>
            <person name="Dalrymple B.P."/>
            <person name="de Bono B."/>
            <person name="Della Gatta G."/>
            <person name="di Bernardo D."/>
            <person name="Down T."/>
            <person name="Engstrom P."/>
            <person name="Fagiolini M."/>
            <person name="Faulkner G."/>
            <person name="Fletcher C.F."/>
            <person name="Fukushima T."/>
            <person name="Furuno M."/>
            <person name="Futaki S."/>
            <person name="Gariboldi M."/>
            <person name="Georgii-Hemming P."/>
            <person name="Gingeras T.R."/>
            <person name="Gojobori T."/>
            <person name="Green R.E."/>
            <person name="Gustincich S."/>
            <person name="Harbers M."/>
            <person name="Hayashi Y."/>
            <person name="Hensch T.K."/>
            <person name="Hirokawa N."/>
            <person name="Hill D."/>
            <person name="Huminiecki L."/>
            <person name="Iacono M."/>
            <person name="Ikeo K."/>
            <person name="Iwama A."/>
            <person name="Ishikawa T."/>
            <person name="Jakt M."/>
            <person name="Kanapin A."/>
            <person name="Katoh M."/>
            <person name="Kawasawa Y."/>
            <person name="Kelso J."/>
            <person name="Kitamura H."/>
            <person name="Kitano H."/>
            <person name="Kollias G."/>
            <person name="Krishnan S.P."/>
            <person name="Kruger A."/>
            <person name="Kummerfeld S.K."/>
            <person name="Kurochkin I.V."/>
            <person name="Lareau L.F."/>
            <person name="Lazarevic D."/>
            <person name="Lipovich L."/>
            <person name="Liu J."/>
            <person name="Liuni S."/>
            <person name="McWilliam S."/>
            <person name="Madan Babu M."/>
            <person name="Madera M."/>
            <person name="Marchionni L."/>
            <person name="Matsuda H."/>
            <person name="Matsuzawa S."/>
            <person name="Miki H."/>
            <person name="Mignone F."/>
            <person name="Miyake S."/>
            <person name="Morris K."/>
            <person name="Mottagui-Tabar S."/>
            <person name="Mulder N."/>
            <person name="Nakano N."/>
            <person name="Nakauchi H."/>
            <person name="Ng P."/>
            <person name="Nilsson R."/>
            <person name="Nishiguchi S."/>
            <person name="Nishikawa S."/>
            <person name="Nori F."/>
            <person name="Ohara O."/>
            <person name="Okazaki Y."/>
            <person name="Orlando V."/>
            <person name="Pang K.C."/>
            <person name="Pavan W.J."/>
            <person name="Pavesi G."/>
            <person name="Pesole G."/>
            <person name="Petrovsky N."/>
            <person name="Piazza S."/>
            <person name="Reed J."/>
            <person name="Reid J.F."/>
            <person name="Ring B.Z."/>
            <person name="Ringwald M."/>
            <person name="Rost B."/>
            <person name="Ruan Y."/>
            <person name="Salzberg S.L."/>
            <person name="Sandelin A."/>
            <person name="Schneider C."/>
            <person name="Schoenbach C."/>
            <person name="Sekiguchi K."/>
            <person name="Semple C.A."/>
            <person name="Seno S."/>
            <person name="Sessa L."/>
            <person name="Sheng Y."/>
            <person name="Shibata Y."/>
            <person name="Shimada H."/>
            <person name="Shimada K."/>
            <person name="Silva D."/>
            <person name="Sinclair B."/>
            <person name="Sperling S."/>
            <person name="Stupka E."/>
            <person name="Sugiura K."/>
            <person name="Sultana R."/>
            <person name="Takenaka Y."/>
            <person name="Taki K."/>
            <person name="Tammoja K."/>
            <person name="Tan S.L."/>
            <person name="Tang S."/>
            <person name="Taylor M.S."/>
            <person name="Tegner J."/>
            <person name="Teichmann S.A."/>
            <person name="Ueda H.R."/>
            <person name="van Nimwegen E."/>
            <person name="Verardo R."/>
            <person name="Wei C.L."/>
            <person name="Yagi K."/>
            <person name="Yamanishi H."/>
            <person name="Zabarovsky E."/>
            <person name="Zhu S."/>
            <person name="Zimmer A."/>
            <person name="Hide W."/>
            <person name="Bult C."/>
            <person name="Grimmond S.M."/>
            <person name="Teasdale R.D."/>
            <person name="Liu E.T."/>
            <person name="Brusic V."/>
            <person name="Quackenbush J."/>
            <person name="Wahlestedt C."/>
            <person name="Mattick J.S."/>
            <person name="Hume D.A."/>
            <person name="Kai C."/>
            <person name="Sasaki D."/>
            <person name="Tomaru Y."/>
            <person name="Fukuda S."/>
            <person name="Kanamori-Katayama M."/>
            <person name="Suzuki M."/>
            <person name="Aoki J."/>
            <person name="Arakawa T."/>
            <person name="Iida J."/>
            <person name="Imamura K."/>
            <person name="Itoh M."/>
            <person name="Kato T."/>
            <person name="Kawaji H."/>
            <person name="Kawagashira N."/>
            <person name="Kawashima T."/>
            <person name="Kojima M."/>
            <person name="Kondo S."/>
            <person name="Konno H."/>
            <person name="Nakano K."/>
            <person name="Ninomiya N."/>
            <person name="Nishio T."/>
            <person name="Okada M."/>
            <person name="Plessy C."/>
            <person name="Shibata K."/>
            <person name="Shiraki T."/>
            <person name="Suzuki S."/>
            <person name="Tagami M."/>
            <person name="Waki K."/>
            <person name="Watahiki A."/>
            <person name="Okamura-Oho Y."/>
            <person name="Suzuki H."/>
            <person name="Kawai J."/>
            <person name="Hayashizaki Y."/>
        </authorList>
    </citation>
    <scope>NUCLEOTIDE SEQUENCE [LARGE SCALE MRNA]</scope>
    <source>
        <strain>C57BL/6J</strain>
        <strain>NOD</strain>
        <tissue>Pancreas</tissue>
        <tissue>Thymus</tissue>
    </source>
</reference>
<reference key="2">
    <citation type="journal article" date="2004" name="Genome Res.">
        <title>The status, quality, and expansion of the NIH full-length cDNA project: the Mammalian Gene Collection (MGC).</title>
        <authorList>
            <consortium name="The MGC Project Team"/>
        </authorList>
    </citation>
    <scope>NUCLEOTIDE SEQUENCE [LARGE SCALE MRNA]</scope>
    <source>
        <strain>C57BL/6J</strain>
        <tissue>Brain</tissue>
    </source>
</reference>
<reference key="3">
    <citation type="journal article" date="2010" name="Cell">
        <title>A tissue-specific atlas of mouse protein phosphorylation and expression.</title>
        <authorList>
            <person name="Huttlin E.L."/>
            <person name="Jedrychowski M.P."/>
            <person name="Elias J.E."/>
            <person name="Goswami T."/>
            <person name="Rad R."/>
            <person name="Beausoleil S.A."/>
            <person name="Villen J."/>
            <person name="Haas W."/>
            <person name="Sowa M.E."/>
            <person name="Gygi S.P."/>
        </authorList>
    </citation>
    <scope>IDENTIFICATION BY MASS SPECTROMETRY [LARGE SCALE ANALYSIS]</scope>
    <source>
        <tissue>Brain</tissue>
        <tissue>Spleen</tissue>
    </source>
</reference>
<dbReference type="EMBL" id="AK007589">
    <property type="protein sequence ID" value="BAB25123.1"/>
    <property type="molecule type" value="mRNA"/>
</dbReference>
<dbReference type="EMBL" id="AK088037">
    <property type="protein sequence ID" value="BAC40110.1"/>
    <property type="molecule type" value="mRNA"/>
</dbReference>
<dbReference type="EMBL" id="BC049678">
    <property type="protein sequence ID" value="AAH49678.1"/>
    <property type="molecule type" value="mRNA"/>
</dbReference>
<dbReference type="EMBL" id="BC050938">
    <property type="protein sequence ID" value="AAH50938.1"/>
    <property type="molecule type" value="mRNA"/>
</dbReference>
<dbReference type="CCDS" id="CCDS22384.1"/>
<dbReference type="RefSeq" id="NP_081240.1">
    <property type="nucleotide sequence ID" value="NM_026964.3"/>
</dbReference>
<dbReference type="RefSeq" id="XP_006509718.1">
    <property type="nucleotide sequence ID" value="XM_006509655.4"/>
</dbReference>
<dbReference type="RefSeq" id="XP_036009842.1">
    <property type="nucleotide sequence ID" value="XM_036153949.1"/>
</dbReference>
<dbReference type="SMR" id="Q9D8X2"/>
<dbReference type="BioGRID" id="231525">
    <property type="interactions" value="3"/>
</dbReference>
<dbReference type="FunCoup" id="Q9D8X2">
    <property type="interactions" value="1769"/>
</dbReference>
<dbReference type="IntAct" id="Q9D8X2">
    <property type="interactions" value="2"/>
</dbReference>
<dbReference type="MINT" id="Q9D8X2"/>
<dbReference type="STRING" id="10090.ENSMUSP00000007865"/>
<dbReference type="iPTMnet" id="Q9D8X2"/>
<dbReference type="PhosphoSitePlus" id="Q9D8X2"/>
<dbReference type="jPOST" id="Q9D8X2"/>
<dbReference type="PaxDb" id="10090-ENSMUSP00000007865"/>
<dbReference type="PeptideAtlas" id="Q9D8X2"/>
<dbReference type="ProteomicsDB" id="265284"/>
<dbReference type="Pumba" id="Q9D8X2"/>
<dbReference type="Antibodypedia" id="27882">
    <property type="antibodies" value="81 antibodies from 15 providers"/>
</dbReference>
<dbReference type="DNASU" id="234388"/>
<dbReference type="Ensembl" id="ENSMUST00000007865.7">
    <property type="protein sequence ID" value="ENSMUSP00000007865.6"/>
    <property type="gene ID" value="ENSMUSG00000007721.7"/>
</dbReference>
<dbReference type="GeneID" id="234388"/>
<dbReference type="KEGG" id="mmu:234388"/>
<dbReference type="UCSC" id="uc009mby.1">
    <property type="organism name" value="mouse"/>
</dbReference>
<dbReference type="AGR" id="MGI:1916403"/>
<dbReference type="CTD" id="115098"/>
<dbReference type="MGI" id="MGI:1916403">
    <property type="gene designation" value="Ccdc124"/>
</dbReference>
<dbReference type="VEuPathDB" id="HostDB:ENSMUSG00000007721"/>
<dbReference type="eggNOG" id="KOG3223">
    <property type="taxonomic scope" value="Eukaryota"/>
</dbReference>
<dbReference type="GeneTree" id="ENSGT00390000012482"/>
<dbReference type="HOGENOM" id="CLU_069723_0_1_1"/>
<dbReference type="InParanoid" id="Q9D8X2"/>
<dbReference type="OMA" id="FEERMMP"/>
<dbReference type="OrthoDB" id="76412at2759"/>
<dbReference type="PhylomeDB" id="Q9D8X2"/>
<dbReference type="TreeFam" id="TF105913"/>
<dbReference type="BioGRID-ORCS" id="234388">
    <property type="hits" value="3 hits in 77 CRISPR screens"/>
</dbReference>
<dbReference type="ChiTaRS" id="Ccdc124">
    <property type="organism name" value="mouse"/>
</dbReference>
<dbReference type="PRO" id="PR:Q9D8X2"/>
<dbReference type="Proteomes" id="UP000000589">
    <property type="component" value="Chromosome 8"/>
</dbReference>
<dbReference type="RNAct" id="Q9D8X2">
    <property type="molecule type" value="protein"/>
</dbReference>
<dbReference type="Bgee" id="ENSMUSG00000007721">
    <property type="expression patterns" value="Expressed in ear vesicle and 231 other cell types or tissues"/>
</dbReference>
<dbReference type="ExpressionAtlas" id="Q9D8X2">
    <property type="expression patterns" value="baseline and differential"/>
</dbReference>
<dbReference type="GO" id="GO:0005813">
    <property type="term" value="C:centrosome"/>
    <property type="evidence" value="ECO:0007669"/>
    <property type="project" value="UniProtKB-SubCell"/>
</dbReference>
<dbReference type="GO" id="GO:0005829">
    <property type="term" value="C:cytosol"/>
    <property type="evidence" value="ECO:0007669"/>
    <property type="project" value="Ensembl"/>
</dbReference>
<dbReference type="GO" id="GO:0030496">
    <property type="term" value="C:midbody"/>
    <property type="evidence" value="ECO:0007669"/>
    <property type="project" value="UniProtKB-SubCell"/>
</dbReference>
<dbReference type="GO" id="GO:0005886">
    <property type="term" value="C:plasma membrane"/>
    <property type="evidence" value="ECO:0007669"/>
    <property type="project" value="Ensembl"/>
</dbReference>
<dbReference type="GO" id="GO:0051301">
    <property type="term" value="P:cell division"/>
    <property type="evidence" value="ECO:0007669"/>
    <property type="project" value="UniProtKB-KW"/>
</dbReference>
<dbReference type="InterPro" id="IPR010422">
    <property type="entry name" value="Ccdc124/Oxs1"/>
</dbReference>
<dbReference type="InterPro" id="IPR054414">
    <property type="entry name" value="Ccdc124/Oxs1_C"/>
</dbReference>
<dbReference type="PANTHER" id="PTHR21680">
    <property type="entry name" value="COILED-COIL DOMAIN-CONTAINING PROTEIN 124"/>
    <property type="match status" value="1"/>
</dbReference>
<dbReference type="PANTHER" id="PTHR21680:SF0">
    <property type="entry name" value="COILED-COIL DOMAIN-CONTAINING PROTEIN 124"/>
    <property type="match status" value="1"/>
</dbReference>
<dbReference type="Pfam" id="PF06244">
    <property type="entry name" value="Ccdc124"/>
    <property type="match status" value="1"/>
</dbReference>
<accession>Q9D8X2</accession>
<accession>Q8C2T0</accession>
<comment type="function">
    <text evidence="1">Ribosome-binding protein involved in ribosome hibernation: associates with translationally inactive ribosomes and stabilizes the nonrotated conformation of the 80S ribosome, thereby promoting ribosome preservation and storage. Also required for proper progression of late cytokinetic stages.</text>
</comment>
<comment type="subunit">
    <text evidence="1">Associates with translationally inactive ribosomes in the nonrotated state. Interacts with RASGEF1B.</text>
</comment>
<comment type="subcellular location">
    <subcellularLocation>
        <location evidence="1">Cytoplasm</location>
        <location evidence="1">Cytoskeleton</location>
        <location evidence="1">Microtubule organizing center</location>
        <location evidence="1">Centrosome</location>
    </subcellularLocation>
    <subcellularLocation>
        <location evidence="1">Midbody</location>
    </subcellularLocation>
    <text evidence="1">Colocalizes with gamma-tubulin at interphase, prophase, metaphase, and anaphase. Relocates from centrosome to midbody at telophase.</text>
</comment>
<comment type="similarity">
    <text evidence="4">Belongs to the CCDC124 family.</text>
</comment>
<feature type="chain" id="PRO_0000263736" description="Coiled-coil domain-containing protein 124">
    <location>
        <begin position="1"/>
        <end position="217"/>
    </location>
</feature>
<feature type="region of interest" description="Disordered" evidence="3">
    <location>
        <begin position="1"/>
        <end position="120"/>
    </location>
</feature>
<feature type="coiled-coil region" evidence="2">
    <location>
        <begin position="15"/>
        <end position="82"/>
    </location>
</feature>
<feature type="compositionally biased region" description="Basic and acidic residues" evidence="3">
    <location>
        <begin position="18"/>
        <end position="74"/>
    </location>
</feature>
<feature type="compositionally biased region" description="Basic and acidic residues" evidence="3">
    <location>
        <begin position="98"/>
        <end position="120"/>
    </location>
</feature>
<feature type="modified residue" description="Phosphoserine" evidence="1">
    <location>
        <position position="136"/>
    </location>
</feature>
<feature type="modified residue" description="Phosphoserine" evidence="1">
    <location>
        <position position="188"/>
    </location>
</feature>
<feature type="sequence conflict" description="In Ref. 1; BAC40110." evidence="4" ref="1">
    <original>K</original>
    <variation>Q</variation>
    <location>
        <position position="23"/>
    </location>
</feature>
<feature type="sequence conflict" description="In Ref. 1; BAC40110." evidence="4" ref="1">
    <original>K</original>
    <variation>E</variation>
    <location>
        <position position="179"/>
    </location>
</feature>
<sequence>MPKKFQGENSKSAAARARRAEAKAAADAKKQKELEDAYWKDEDKHVMRKEQRKEEKEKRRLEQLERKKETQRLLEEEDSRLKGGKAPRVAPAKVTRAQIEDSLRREQRAEPVEKAKSHLELPLEENLNRRLQEEGSVEARTVEDAIAVLSVAEEADRHPERRMRAAFTAFEEVQLPRLKQENPNMRLSQLKQLLKKEWLRSPDNPMNQRALPFNAPK</sequence>
<gene>
    <name type="primary">Ccdc124</name>
</gene>
<evidence type="ECO:0000250" key="1">
    <source>
        <dbReference type="UniProtKB" id="Q96CT7"/>
    </source>
</evidence>
<evidence type="ECO:0000255" key="2"/>
<evidence type="ECO:0000256" key="3">
    <source>
        <dbReference type="SAM" id="MobiDB-lite"/>
    </source>
</evidence>
<evidence type="ECO:0000305" key="4"/>
<organism>
    <name type="scientific">Mus musculus</name>
    <name type="common">Mouse</name>
    <dbReference type="NCBI Taxonomy" id="10090"/>
    <lineage>
        <taxon>Eukaryota</taxon>
        <taxon>Metazoa</taxon>
        <taxon>Chordata</taxon>
        <taxon>Craniata</taxon>
        <taxon>Vertebrata</taxon>
        <taxon>Euteleostomi</taxon>
        <taxon>Mammalia</taxon>
        <taxon>Eutheria</taxon>
        <taxon>Euarchontoglires</taxon>
        <taxon>Glires</taxon>
        <taxon>Rodentia</taxon>
        <taxon>Myomorpha</taxon>
        <taxon>Muroidea</taxon>
        <taxon>Muridae</taxon>
        <taxon>Murinae</taxon>
        <taxon>Mus</taxon>
        <taxon>Mus</taxon>
    </lineage>
</organism>
<name>CC124_MOUSE</name>
<keyword id="KW-0131">Cell cycle</keyword>
<keyword id="KW-0132">Cell division</keyword>
<keyword id="KW-0175">Coiled coil</keyword>
<keyword id="KW-0963">Cytoplasm</keyword>
<keyword id="KW-0206">Cytoskeleton</keyword>
<keyword id="KW-0597">Phosphoprotein</keyword>
<keyword id="KW-1185">Reference proteome</keyword>
<protein>
    <recommendedName>
        <fullName>Coiled-coil domain-containing protein 124</fullName>
    </recommendedName>
</protein>
<proteinExistence type="evidence at protein level"/>